<sequence length="659" mass="74056">MDDERRVLCPENRGLAAYVLQKKQEYAEKPKGLSENLERTFVKGYRSVCDAKDPINTLKDLSQIKGFGKWMVKLMKGYFDTAVESSEQEDLPDNRAGKKANGKKRYIPQRNSVGYALLITLHRRTTNGKEFMRKQELIDAADANGLSHAPVGPEKGKGKAGLGHSKREWYSGWSCMTTLIQKGLVVKSSNPAKYMLTVEGREVANECILRSGLPDSVDILSVDEMDPTPQAKKTPNQNPTCSFTMREELPYVDPRCRAQSAIPSDILEKFTPFGYSKEQVVAAFREVSDGSGDKDPSTLWLSVMCHLRQAEVYNSCPDSRNSKKDSSGPFKSQIRQVDLEGSRAKKFRSCNDGSTLNPCSSGSSHAVKACSSSLASDGTKGITNIPRLPPLQFGETFEEAYDVILILDDREKFATKGSRSRNIVENICSEFNIKIEVRRLPVGDCIWIARHKYLETEYVLDFIAERKNVDDMRSSIRDNRYRDQKLRLQRSGFKKLIYILEGDPNHSDAAESIKTACFTTEILEGFDVLRTHGLGETLRKYGYLTKSIYQYYKLRVNDNDQSKGAASCPSFDSFVKRCQDLDKMTISDVFAIQLMQVPQVTEEIAIAVLDMYPTLLSLASAYSHLEADVSAQEEMLRNRSNNVICASASKNIFKLVWGE</sequence>
<proteinExistence type="evidence at protein level"/>
<dbReference type="EC" id="3.1.22.-"/>
<dbReference type="EMBL" id="AB177892">
    <property type="protein sequence ID" value="BAD66696.1"/>
    <property type="molecule type" value="mRNA"/>
</dbReference>
<dbReference type="EMBL" id="EF154086">
    <property type="protein sequence ID" value="ABL98212.1"/>
    <property type="status" value="ALT_FRAME"/>
    <property type="molecule type" value="mRNA"/>
</dbReference>
<dbReference type="EMBL" id="AL022198">
    <property type="protein sequence ID" value="CAA18206.1"/>
    <property type="status" value="ALT_SEQ"/>
    <property type="molecule type" value="Genomic_DNA"/>
</dbReference>
<dbReference type="EMBL" id="AL161577">
    <property type="protein sequence ID" value="CAB79805.1"/>
    <property type="status" value="ALT_SEQ"/>
    <property type="molecule type" value="Genomic_DNA"/>
</dbReference>
<dbReference type="EMBL" id="CP002687">
    <property type="protein sequence ID" value="AEE85822.1"/>
    <property type="molecule type" value="Genomic_DNA"/>
</dbReference>
<dbReference type="PIR" id="D85361">
    <property type="entry name" value="D85361"/>
</dbReference>
<dbReference type="RefSeq" id="NP_194816.2">
    <property type="nucleotide sequence ID" value="NM_119234.4"/>
</dbReference>
<dbReference type="SMR" id="Q5W9E7"/>
<dbReference type="BioGRID" id="14498">
    <property type="interactions" value="1"/>
</dbReference>
<dbReference type="FunCoup" id="Q5W9E7">
    <property type="interactions" value="1549"/>
</dbReference>
<dbReference type="STRING" id="3702.Q5W9E7"/>
<dbReference type="PaxDb" id="3702-AT4G30870.1"/>
<dbReference type="ProteomicsDB" id="251021"/>
<dbReference type="EnsemblPlants" id="AT4G30870.1">
    <property type="protein sequence ID" value="AT4G30870.1"/>
    <property type="gene ID" value="AT4G30870"/>
</dbReference>
<dbReference type="GeneID" id="829211"/>
<dbReference type="Gramene" id="AT4G30870.1">
    <property type="protein sequence ID" value="AT4G30870.1"/>
    <property type="gene ID" value="AT4G30870"/>
</dbReference>
<dbReference type="KEGG" id="ath:AT4G30870"/>
<dbReference type="Araport" id="AT4G30870"/>
<dbReference type="TAIR" id="AT4G30870">
    <property type="gene designation" value="MUS81"/>
</dbReference>
<dbReference type="eggNOG" id="KOG2379">
    <property type="taxonomic scope" value="Eukaryota"/>
</dbReference>
<dbReference type="HOGENOM" id="CLU_014329_2_0_1"/>
<dbReference type="InParanoid" id="Q5W9E7"/>
<dbReference type="OMA" id="ELGDAMW"/>
<dbReference type="PhylomeDB" id="Q5W9E7"/>
<dbReference type="PRO" id="PR:Q5W9E7"/>
<dbReference type="Proteomes" id="UP000006548">
    <property type="component" value="Chromosome 4"/>
</dbReference>
<dbReference type="ExpressionAtlas" id="Q5W9E7">
    <property type="expression patterns" value="baseline and differential"/>
</dbReference>
<dbReference type="GO" id="GO:0000794">
    <property type="term" value="C:condensed nuclear chromosome"/>
    <property type="evidence" value="ECO:0000314"/>
    <property type="project" value="TAIR"/>
</dbReference>
<dbReference type="GO" id="GO:0005730">
    <property type="term" value="C:nucleolus"/>
    <property type="evidence" value="ECO:0007669"/>
    <property type="project" value="UniProtKB-SubCell"/>
</dbReference>
<dbReference type="GO" id="GO:0008821">
    <property type="term" value="F:crossover junction DNA endonuclease activity"/>
    <property type="evidence" value="ECO:0007669"/>
    <property type="project" value="InterPro"/>
</dbReference>
<dbReference type="GO" id="GO:0003677">
    <property type="term" value="F:DNA binding"/>
    <property type="evidence" value="ECO:0007669"/>
    <property type="project" value="UniProtKB-KW"/>
</dbReference>
<dbReference type="GO" id="GO:0046872">
    <property type="term" value="F:metal ion binding"/>
    <property type="evidence" value="ECO:0007669"/>
    <property type="project" value="UniProtKB-KW"/>
</dbReference>
<dbReference type="GO" id="GO:0051301">
    <property type="term" value="P:cell division"/>
    <property type="evidence" value="ECO:0007669"/>
    <property type="project" value="UniProtKB-KW"/>
</dbReference>
<dbReference type="GO" id="GO:0006308">
    <property type="term" value="P:DNA catabolic process"/>
    <property type="evidence" value="ECO:0007669"/>
    <property type="project" value="InterPro"/>
</dbReference>
<dbReference type="GO" id="GO:0006974">
    <property type="term" value="P:DNA damage response"/>
    <property type="evidence" value="ECO:0000270"/>
    <property type="project" value="UniProtKB"/>
</dbReference>
<dbReference type="GO" id="GO:0006281">
    <property type="term" value="P:DNA repair"/>
    <property type="evidence" value="ECO:0000315"/>
    <property type="project" value="UniProtKB"/>
</dbReference>
<dbReference type="GO" id="GO:0000724">
    <property type="term" value="P:double-strand break repair via homologous recombination"/>
    <property type="evidence" value="ECO:0000315"/>
    <property type="project" value="TAIR"/>
</dbReference>
<dbReference type="GO" id="GO:0007129">
    <property type="term" value="P:homologous chromosome pairing at meiosis"/>
    <property type="evidence" value="ECO:0000316"/>
    <property type="project" value="TAIR"/>
</dbReference>
<dbReference type="GO" id="GO:0006312">
    <property type="term" value="P:mitotic recombination"/>
    <property type="evidence" value="ECO:0000315"/>
    <property type="project" value="TAIR"/>
</dbReference>
<dbReference type="GO" id="GO:0000723">
    <property type="term" value="P:telomere maintenance"/>
    <property type="evidence" value="ECO:0000315"/>
    <property type="project" value="UniProtKB"/>
</dbReference>
<dbReference type="CDD" id="cd21036">
    <property type="entry name" value="WH_MUS81"/>
    <property type="match status" value="1"/>
</dbReference>
<dbReference type="CDD" id="cd20074">
    <property type="entry name" value="XPF_nuclease_Mus81"/>
    <property type="match status" value="1"/>
</dbReference>
<dbReference type="FunFam" id="1.10.10.10:FF:000307">
    <property type="entry name" value="Crossover junction endonuclease MUS81"/>
    <property type="match status" value="1"/>
</dbReference>
<dbReference type="FunFam" id="1.10.150.670:FF:000003">
    <property type="entry name" value="Crossover junction endonuclease MUS81"/>
    <property type="match status" value="1"/>
</dbReference>
<dbReference type="FunFam" id="3.40.50.10130:FF:000005">
    <property type="entry name" value="crossover junction endonuclease MUS81 isoform X1"/>
    <property type="match status" value="1"/>
</dbReference>
<dbReference type="Gene3D" id="3.40.50.10130">
    <property type="match status" value="1"/>
</dbReference>
<dbReference type="Gene3D" id="1.10.150.670">
    <property type="entry name" value="Crossover junction endonuclease EME1, DNA-binding domain"/>
    <property type="match status" value="1"/>
</dbReference>
<dbReference type="Gene3D" id="1.10.10.10">
    <property type="entry name" value="Winged helix-like DNA-binding domain superfamily/Winged helix DNA-binding domain"/>
    <property type="match status" value="1"/>
</dbReference>
<dbReference type="InterPro" id="IPR042530">
    <property type="entry name" value="EME1/EME2_C"/>
</dbReference>
<dbReference type="InterPro" id="IPR006166">
    <property type="entry name" value="ERCC4_domain"/>
</dbReference>
<dbReference type="InterPro" id="IPR033309">
    <property type="entry name" value="Mus81"/>
</dbReference>
<dbReference type="InterPro" id="IPR011335">
    <property type="entry name" value="Restrct_endonuc-II-like"/>
</dbReference>
<dbReference type="InterPro" id="IPR036388">
    <property type="entry name" value="WH-like_DNA-bd_sf"/>
</dbReference>
<dbReference type="InterPro" id="IPR047417">
    <property type="entry name" value="WH_MUS81"/>
</dbReference>
<dbReference type="InterPro" id="IPR047416">
    <property type="entry name" value="XPF_nuclease_Mus81"/>
</dbReference>
<dbReference type="PANTHER" id="PTHR13451">
    <property type="entry name" value="CLASS II CROSSOVER JUNCTION ENDONUCLEASE MUS81"/>
    <property type="match status" value="1"/>
</dbReference>
<dbReference type="PANTHER" id="PTHR13451:SF0">
    <property type="entry name" value="CROSSOVER JUNCTION ENDONUCLEASE MUS81"/>
    <property type="match status" value="1"/>
</dbReference>
<dbReference type="Pfam" id="PF02732">
    <property type="entry name" value="ERCC4"/>
    <property type="match status" value="1"/>
</dbReference>
<dbReference type="Pfam" id="PF21136">
    <property type="entry name" value="MUS81-like_WH"/>
    <property type="match status" value="1"/>
</dbReference>
<dbReference type="SMART" id="SM00891">
    <property type="entry name" value="ERCC4"/>
    <property type="match status" value="1"/>
</dbReference>
<dbReference type="SUPFAM" id="SSF52980">
    <property type="entry name" value="Restriction endonuclease-like"/>
    <property type="match status" value="1"/>
</dbReference>
<comment type="function">
    <text evidence="1 2 3 4 5 6">Interacts with EME1 to form a DNA structure-specific endonuclease with substrate preference for branched DNA structures with a 5'-end at the branch nick. Typical substrates include 3'-flap structures, D-loops, replication forks, nicked Holliday junctions and also intact Holliday junctions with a reduced efficiency. May be required in mitosis for the processing of stalled or collapsed replication fork intermediates. Plays a role in DNA repair and in genotoxic stress-induced homologous recombination (HR) in somatic cells. Mediates a subset of meiotic recombination events that are insensitive to crossover interference. Together with SEND1, essential for the resolution of toxic replication structures to ensure genome stability, and to maintain telomere integrity and replication (PubMed:26704385).</text>
</comment>
<comment type="cofactor">
    <cofactor evidence="4">
        <name>Mg(2+)</name>
        <dbReference type="ChEBI" id="CHEBI:18420"/>
    </cofactor>
    <cofactor evidence="4">
        <name>Ca(2+)</name>
        <dbReference type="ChEBI" id="CHEBI:29108"/>
    </cofactor>
</comment>
<comment type="subunit">
    <text>Forms a heterodimer with EME1A or EME1B.</text>
</comment>
<comment type="subcellular location">
    <subcellularLocation>
        <location evidence="3">Nucleus</location>
    </subcellularLocation>
    <subcellularLocation>
        <location evidence="3">Nucleus</location>
        <location evidence="3">Nucleolus</location>
    </subcellularLocation>
</comment>
<comment type="tissue specificity">
    <text evidence="2 3">Ubiquitous but preferentially expressed in young flowers buds, notably in anthers.</text>
</comment>
<comment type="induction">
    <text evidence="2">By DNA-damaging treatments such as MMS, cisplatin and gamma-radiation.</text>
</comment>
<comment type="disruption phenotype">
    <text evidence="2 3 6">Sensitive to the mutagens MMS and MMC. Increased sensitivity to gamma radiation. Deficiency in homologous recombination in somatic cells but only after induction by genotoxic stress. Decreased pollen viability with morphologically aberrant (small and misshaped) grain. Moderate reduction in meiotic crossovers. The double mutant mus81 send1 exhibits severe developmental defects (e.g. strong growth retardation and impaired leaf and shoot development), increased endoreduplication, slower cell cycle progression, spontaneous cell death and genome instability associated with a dramatic loss of telomeric repeats (PubMed:26704385).</text>
</comment>
<comment type="miscellaneous">
    <text>Two distinct classes of crossovers have been demonstrated in Arabidopsis. Class I is MSH4 dependent and exhibits crossover interference. Class II is MUS81 dependent and exhibits no interference.</text>
</comment>
<comment type="similarity">
    <text evidence="9">Belongs to the XPF family.</text>
</comment>
<comment type="sequence caution" evidence="9">
    <conflict type="frameshift">
        <sequence resource="EMBL-CDS" id="ABL98212"/>
    </conflict>
</comment>
<comment type="sequence caution" evidence="9">
    <conflict type="erroneous gene model prediction">
        <sequence resource="EMBL-CDS" id="CAA18206"/>
    </conflict>
</comment>
<comment type="sequence caution" evidence="9">
    <conflict type="erroneous gene model prediction">
        <sequence resource="EMBL-CDS" id="CAB79805"/>
    </conflict>
</comment>
<reference key="1">
    <citation type="journal article" date="2007" name="Plant Cell Physiol.">
        <title>Two alternatively spliced transcripts generated from OsMUS81, a rice homolog of yeast MUS81, are up-regulated by DNA-damaging treatments.</title>
        <authorList>
            <person name="Mimida N."/>
            <person name="Kitamoto H."/>
            <person name="Osakabe K."/>
            <person name="Nakashima M."/>
            <person name="Ito Y."/>
            <person name="Heyer W.D."/>
            <person name="Toki S."/>
            <person name="Ichikawa H."/>
        </authorList>
    </citation>
    <scope>NUCLEOTIDE SEQUENCE [MRNA]</scope>
    <source>
        <strain>cv. Columbia</strain>
    </source>
</reference>
<reference key="2">
    <citation type="journal article" date="2008" name="Plant J.">
        <title>Expression and functional analysis of AtMUS81 in Arabidopsis meiosis reveals a role in the second pathway of crossing-over.</title>
        <authorList>
            <person name="Higgins J.D."/>
            <person name="Buckling E.F."/>
            <person name="Franklin F.C."/>
            <person name="Jones G.H."/>
        </authorList>
    </citation>
    <scope>NUCLEOTIDE SEQUENCE [MRNA]</scope>
    <scope>FUNCTION</scope>
    <scope>DISRUPTION PHENOTYPE</scope>
    <scope>TISSUE SPECIFICITY</scope>
    <scope>SUBCELLULAR LOCATION</scope>
</reference>
<reference key="3">
    <citation type="journal article" date="1999" name="Nature">
        <title>Sequence and analysis of chromosome 4 of the plant Arabidopsis thaliana.</title>
        <authorList>
            <person name="Mayer K.F.X."/>
            <person name="Schueller C."/>
            <person name="Wambutt R."/>
            <person name="Murphy G."/>
            <person name="Volckaert G."/>
            <person name="Pohl T."/>
            <person name="Duesterhoeft A."/>
            <person name="Stiekema W."/>
            <person name="Entian K.-D."/>
            <person name="Terryn N."/>
            <person name="Harris B."/>
            <person name="Ansorge W."/>
            <person name="Brandt P."/>
            <person name="Grivell L.A."/>
            <person name="Rieger M."/>
            <person name="Weichselgartner M."/>
            <person name="de Simone V."/>
            <person name="Obermaier B."/>
            <person name="Mache R."/>
            <person name="Mueller M."/>
            <person name="Kreis M."/>
            <person name="Delseny M."/>
            <person name="Puigdomenech P."/>
            <person name="Watson M."/>
            <person name="Schmidtheini T."/>
            <person name="Reichert B."/>
            <person name="Portetelle D."/>
            <person name="Perez-Alonso M."/>
            <person name="Boutry M."/>
            <person name="Bancroft I."/>
            <person name="Vos P."/>
            <person name="Hoheisel J."/>
            <person name="Zimmermann W."/>
            <person name="Wedler H."/>
            <person name="Ridley P."/>
            <person name="Langham S.-A."/>
            <person name="McCullagh B."/>
            <person name="Bilham L."/>
            <person name="Robben J."/>
            <person name="van der Schueren J."/>
            <person name="Grymonprez B."/>
            <person name="Chuang Y.-J."/>
            <person name="Vandenbussche F."/>
            <person name="Braeken M."/>
            <person name="Weltjens I."/>
            <person name="Voet M."/>
            <person name="Bastiaens I."/>
            <person name="Aert R."/>
            <person name="Defoor E."/>
            <person name="Weitzenegger T."/>
            <person name="Bothe G."/>
            <person name="Ramsperger U."/>
            <person name="Hilbert H."/>
            <person name="Braun M."/>
            <person name="Holzer E."/>
            <person name="Brandt A."/>
            <person name="Peters S."/>
            <person name="van Staveren M."/>
            <person name="Dirkse W."/>
            <person name="Mooijman P."/>
            <person name="Klein Lankhorst R."/>
            <person name="Rose M."/>
            <person name="Hauf J."/>
            <person name="Koetter P."/>
            <person name="Berneiser S."/>
            <person name="Hempel S."/>
            <person name="Feldpausch M."/>
            <person name="Lamberth S."/>
            <person name="Van den Daele H."/>
            <person name="De Keyser A."/>
            <person name="Buysshaert C."/>
            <person name="Gielen J."/>
            <person name="Villarroel R."/>
            <person name="De Clercq R."/>
            <person name="van Montagu M."/>
            <person name="Rogers J."/>
            <person name="Cronin A."/>
            <person name="Quail M.A."/>
            <person name="Bray-Allen S."/>
            <person name="Clark L."/>
            <person name="Doggett J."/>
            <person name="Hall S."/>
            <person name="Kay M."/>
            <person name="Lennard N."/>
            <person name="McLay K."/>
            <person name="Mayes R."/>
            <person name="Pettett A."/>
            <person name="Rajandream M.A."/>
            <person name="Lyne M."/>
            <person name="Benes V."/>
            <person name="Rechmann S."/>
            <person name="Borkova D."/>
            <person name="Bloecker H."/>
            <person name="Scharfe M."/>
            <person name="Grimm M."/>
            <person name="Loehnert T.-H."/>
            <person name="Dose S."/>
            <person name="de Haan M."/>
            <person name="Maarse A.C."/>
            <person name="Schaefer M."/>
            <person name="Mueller-Auer S."/>
            <person name="Gabel C."/>
            <person name="Fuchs M."/>
            <person name="Fartmann B."/>
            <person name="Granderath K."/>
            <person name="Dauner D."/>
            <person name="Herzl A."/>
            <person name="Neumann S."/>
            <person name="Argiriou A."/>
            <person name="Vitale D."/>
            <person name="Liguori R."/>
            <person name="Piravandi E."/>
            <person name="Massenet O."/>
            <person name="Quigley F."/>
            <person name="Clabauld G."/>
            <person name="Muendlein A."/>
            <person name="Felber R."/>
            <person name="Schnabl S."/>
            <person name="Hiller R."/>
            <person name="Schmidt W."/>
            <person name="Lecharny A."/>
            <person name="Aubourg S."/>
            <person name="Chefdor F."/>
            <person name="Cooke R."/>
            <person name="Berger C."/>
            <person name="Monfort A."/>
            <person name="Casacuberta E."/>
            <person name="Gibbons T."/>
            <person name="Weber N."/>
            <person name="Vandenbol M."/>
            <person name="Bargues M."/>
            <person name="Terol J."/>
            <person name="Torres A."/>
            <person name="Perez-Perez A."/>
            <person name="Purnelle B."/>
            <person name="Bent E."/>
            <person name="Johnson S."/>
            <person name="Tacon D."/>
            <person name="Jesse T."/>
            <person name="Heijnen L."/>
            <person name="Schwarz S."/>
            <person name="Scholler P."/>
            <person name="Heber S."/>
            <person name="Francs P."/>
            <person name="Bielke C."/>
            <person name="Frishman D."/>
            <person name="Haase D."/>
            <person name="Lemcke K."/>
            <person name="Mewes H.-W."/>
            <person name="Stocker S."/>
            <person name="Zaccaria P."/>
            <person name="Bevan M."/>
            <person name="Wilson R.K."/>
            <person name="de la Bastide M."/>
            <person name="Habermann K."/>
            <person name="Parnell L."/>
            <person name="Dedhia N."/>
            <person name="Gnoj L."/>
            <person name="Schutz K."/>
            <person name="Huang E."/>
            <person name="Spiegel L."/>
            <person name="Sekhon M."/>
            <person name="Murray J."/>
            <person name="Sheet P."/>
            <person name="Cordes M."/>
            <person name="Abu-Threideh J."/>
            <person name="Stoneking T."/>
            <person name="Kalicki J."/>
            <person name="Graves T."/>
            <person name="Harmon G."/>
            <person name="Edwards J."/>
            <person name="Latreille P."/>
            <person name="Courtney L."/>
            <person name="Cloud J."/>
            <person name="Abbott A."/>
            <person name="Scott K."/>
            <person name="Johnson D."/>
            <person name="Minx P."/>
            <person name="Bentley D."/>
            <person name="Fulton B."/>
            <person name="Miller N."/>
            <person name="Greco T."/>
            <person name="Kemp K."/>
            <person name="Kramer J."/>
            <person name="Fulton L."/>
            <person name="Mardis E."/>
            <person name="Dante M."/>
            <person name="Pepin K."/>
            <person name="Hillier L.W."/>
            <person name="Nelson J."/>
            <person name="Spieth J."/>
            <person name="Ryan E."/>
            <person name="Andrews S."/>
            <person name="Geisel C."/>
            <person name="Layman D."/>
            <person name="Du H."/>
            <person name="Ali J."/>
            <person name="Berghoff A."/>
            <person name="Jones K."/>
            <person name="Drone K."/>
            <person name="Cotton M."/>
            <person name="Joshu C."/>
            <person name="Antonoiu B."/>
            <person name="Zidanic M."/>
            <person name="Strong C."/>
            <person name="Sun H."/>
            <person name="Lamar B."/>
            <person name="Yordan C."/>
            <person name="Ma P."/>
            <person name="Zhong J."/>
            <person name="Preston R."/>
            <person name="Vil D."/>
            <person name="Shekher M."/>
            <person name="Matero A."/>
            <person name="Shah R."/>
            <person name="Swaby I.K."/>
            <person name="O'Shaughnessy A."/>
            <person name="Rodriguez M."/>
            <person name="Hoffman J."/>
            <person name="Till S."/>
            <person name="Granat S."/>
            <person name="Shohdy N."/>
            <person name="Hasegawa A."/>
            <person name="Hameed A."/>
            <person name="Lodhi M."/>
            <person name="Johnson A."/>
            <person name="Chen E."/>
            <person name="Marra M.A."/>
            <person name="Martienssen R."/>
            <person name="McCombie W.R."/>
        </authorList>
    </citation>
    <scope>NUCLEOTIDE SEQUENCE [LARGE SCALE GENOMIC DNA]</scope>
    <source>
        <strain>cv. Columbia</strain>
    </source>
</reference>
<reference key="4">
    <citation type="journal article" date="2017" name="Plant J.">
        <title>Araport11: a complete reannotation of the Arabidopsis thaliana reference genome.</title>
        <authorList>
            <person name="Cheng C.Y."/>
            <person name="Krishnakumar V."/>
            <person name="Chan A.P."/>
            <person name="Thibaud-Nissen F."/>
            <person name="Schobel S."/>
            <person name="Town C.D."/>
        </authorList>
    </citation>
    <scope>GENOME REANNOTATION</scope>
    <source>
        <strain>cv. Columbia</strain>
    </source>
</reference>
<reference key="5">
    <citation type="journal article" date="2006" name="Nucleic Acids Res.">
        <title>The role of AtMUS81 in DNA repair and its genetic interaction with the helicase AtRecQ4A.</title>
        <authorList>
            <person name="Hartung F."/>
            <person name="Suer S."/>
            <person name="Bergmann T."/>
            <person name="Puchta H."/>
        </authorList>
    </citation>
    <scope>FUNCTION</scope>
    <scope>H-H-H MOTIF</scope>
</reference>
<reference key="6">
    <citation type="journal article" date="2007" name="PLoS Genet.">
        <title>The role of AtMUS81 in interference-insensitive crossovers in A. thaliana.</title>
        <authorList>
            <person name="Berchowitz L.E."/>
            <person name="Francis K.E."/>
            <person name="Bey A.L."/>
            <person name="Copenhaver G.P."/>
        </authorList>
    </citation>
    <scope>FUNCTION</scope>
    <scope>DISRUPTION PHENOTYPE</scope>
    <scope>TISSUE SPECIFICITY</scope>
    <scope>INDUCTION</scope>
</reference>
<reference key="7">
    <citation type="journal article" date="2007" name="Trends Genet.">
        <title>The road to crossovers: plants have their say.</title>
        <authorList>
            <person name="Mezard C."/>
            <person name="Vignard J."/>
            <person name="Drouaud J."/>
            <person name="Mercier R."/>
        </authorList>
    </citation>
    <scope>REVIEW</scope>
</reference>
<reference key="8">
    <citation type="journal article" date="2009" name="Plant Physiol.">
        <title>Two distinct MUS81-EME1 complexes from Arabidopsis process Holliday junctions.</title>
        <authorList>
            <person name="Geuting V."/>
            <person name="Kobbe D."/>
            <person name="Hartung F."/>
            <person name="Duerr J."/>
            <person name="Focke M."/>
            <person name="Puchta H."/>
        </authorList>
    </citation>
    <scope>FUNCTION</scope>
    <scope>INTERACTION WITH EME1A AND EME1B</scope>
    <scope>MUTAGENESIS OF 470-ASP-ASP-471</scope>
    <scope>COFACTOR</scope>
</reference>
<reference key="9">
    <citation type="journal article" date="2010" name="Plant Cell">
        <title>RAD5A, RECQ4A, and MUS81 have specific functions in homologous recombination and define different pathways of DNA repair in Arabidopsis thaliana.</title>
        <authorList>
            <person name="Mannuss A."/>
            <person name="Dukowic-Schulze S."/>
            <person name="Suer S."/>
            <person name="Hartung F."/>
            <person name="Pacher M."/>
            <person name="Puchta H."/>
        </authorList>
    </citation>
    <scope>FUNCTION</scope>
</reference>
<reference key="10">
    <citation type="journal article" date="2016" name="Plant Cell">
        <title>The structure-specific endonucleases MUS81 and SEND1 are essential for telomere stability in Arabidopsis.</title>
        <authorList>
            <person name="Olivier M."/>
            <person name="Da Ines O."/>
            <person name="Amiard S."/>
            <person name="Serra H."/>
            <person name="Goubely C."/>
            <person name="White C.I."/>
            <person name="Gallego M.E."/>
        </authorList>
    </citation>
    <scope>FUNCTION</scope>
    <scope>DISRUPTION PHENOTYPE</scope>
    <source>
        <strain>cv. Columbia</strain>
    </source>
</reference>
<protein>
    <recommendedName>
        <fullName evidence="8">Crossover junction endonuclease MUS81</fullName>
        <ecNumber>3.1.22.-</ecNumber>
    </recommendedName>
    <alternativeName>
        <fullName evidence="7 8">Protein MMS AND UV SENSITIVE 81</fullName>
        <shortName evidence="7 8">AtMUS81</shortName>
    </alternativeName>
</protein>
<feature type="chain" id="PRO_0000418424" description="Crossover junction endonuclease MUS81">
    <location>
        <begin position="1"/>
        <end position="659"/>
    </location>
</feature>
<feature type="domain" description="ERCC4">
    <location>
        <begin position="404"/>
        <end position="503"/>
    </location>
</feature>
<feature type="short sequence motif" description="Helix-hairpin-helix motif 1">
    <location>
        <begin position="59"/>
        <end position="78"/>
    </location>
</feature>
<feature type="short sequence motif" description="Helix-hairpin-helix motif 2">
    <location>
        <begin position="585"/>
        <end position="622"/>
    </location>
</feature>
<feature type="mutagenesis site" description="Able to form heterodimer with EME1A or EME1B but without any endonucleolytic activity." evidence="4">
    <original>DD</original>
    <variation>AA</variation>
    <location>
        <begin position="470"/>
        <end position="471"/>
    </location>
</feature>
<gene>
    <name evidence="7 8" type="primary">MUS81</name>
    <name evidence="10" type="ordered locus">At4g30870</name>
    <name evidence="11" type="ORF">F6I18.220</name>
</gene>
<keyword id="KW-0106">Calcium</keyword>
<keyword id="KW-0131">Cell cycle</keyword>
<keyword id="KW-0132">Cell division</keyword>
<keyword id="KW-0227">DNA damage</keyword>
<keyword id="KW-0233">DNA recombination</keyword>
<keyword id="KW-0234">DNA repair</keyword>
<keyword id="KW-0238">DNA-binding</keyword>
<keyword id="KW-0255">Endonuclease</keyword>
<keyword id="KW-0378">Hydrolase</keyword>
<keyword id="KW-0460">Magnesium</keyword>
<keyword id="KW-0469">Meiosis</keyword>
<keyword id="KW-0479">Metal-binding</keyword>
<keyword id="KW-0498">Mitosis</keyword>
<keyword id="KW-0540">Nuclease</keyword>
<keyword id="KW-0539">Nucleus</keyword>
<keyword id="KW-1185">Reference proteome</keyword>
<keyword id="KW-0677">Repeat</keyword>
<accession>Q5W9E7</accession>
<accession>A1Z073</accession>
<accession>O65562</accession>
<organism>
    <name type="scientific">Arabidopsis thaliana</name>
    <name type="common">Mouse-ear cress</name>
    <dbReference type="NCBI Taxonomy" id="3702"/>
    <lineage>
        <taxon>Eukaryota</taxon>
        <taxon>Viridiplantae</taxon>
        <taxon>Streptophyta</taxon>
        <taxon>Embryophyta</taxon>
        <taxon>Tracheophyta</taxon>
        <taxon>Spermatophyta</taxon>
        <taxon>Magnoliopsida</taxon>
        <taxon>eudicotyledons</taxon>
        <taxon>Gunneridae</taxon>
        <taxon>Pentapetalae</taxon>
        <taxon>rosids</taxon>
        <taxon>malvids</taxon>
        <taxon>Brassicales</taxon>
        <taxon>Brassicaceae</taxon>
        <taxon>Camelineae</taxon>
        <taxon>Arabidopsis</taxon>
    </lineage>
</organism>
<name>MUS81_ARATH</name>
<evidence type="ECO:0000269" key="1">
    <source>
    </source>
</evidence>
<evidence type="ECO:0000269" key="2">
    <source>
    </source>
</evidence>
<evidence type="ECO:0000269" key="3">
    <source>
    </source>
</evidence>
<evidence type="ECO:0000269" key="4">
    <source>
    </source>
</evidence>
<evidence type="ECO:0000269" key="5">
    <source>
    </source>
</evidence>
<evidence type="ECO:0000269" key="6">
    <source>
    </source>
</evidence>
<evidence type="ECO:0000303" key="7">
    <source>
    </source>
</evidence>
<evidence type="ECO:0000303" key="8">
    <source>
    </source>
</evidence>
<evidence type="ECO:0000305" key="9"/>
<evidence type="ECO:0000312" key="10">
    <source>
        <dbReference type="Araport" id="AT4G30870"/>
    </source>
</evidence>
<evidence type="ECO:0000312" key="11">
    <source>
        <dbReference type="EMBL" id="CAA18206.1"/>
    </source>
</evidence>